<feature type="chain" id="PRO_0000250693" description="D-aminopeptidase">
    <location>
        <begin position="1"/>
        <end position="518"/>
    </location>
</feature>
<feature type="region of interest" description="Disordered" evidence="2">
    <location>
        <begin position="373"/>
        <end position="392"/>
    </location>
</feature>
<feature type="region of interest" description="Important for specificity" evidence="1">
    <location>
        <begin position="477"/>
        <end position="487"/>
    </location>
</feature>
<feature type="active site" description="Nucleophile" evidence="1">
    <location>
        <position position="62"/>
    </location>
</feature>
<feature type="active site" description="Proton donor/acceptor" evidence="1">
    <location>
        <position position="65"/>
    </location>
</feature>
<feature type="binding site" evidence="1">
    <location>
        <position position="481"/>
    </location>
    <ligand>
        <name>substrate</name>
    </ligand>
</feature>
<proteinExistence type="inferred from homology"/>
<gene>
    <name evidence="1" type="primary">dap</name>
    <name type="ordered locus">BMEII0350</name>
</gene>
<keyword id="KW-0031">Aminopeptidase</keyword>
<keyword id="KW-0378">Hydrolase</keyword>
<keyword id="KW-0645">Protease</keyword>
<sequence length="518" mass="56888">MPNIDLPTLEAFVHAIPQNYKGPGGAVAVVRNGEIVLRHAWGFADLAARKAMTPETRMPICSVSKQFTCAVLLDCIGEPEMLDSALAAYLDQFEDGRPAVRDLCNNQSGLRDYWALTVLCGAAPEGIFLPDQAQNLLRRLKTTHFAPGTHYSYCNGNFRILADLIEQHTGRSLADLLAERIFAPAAMKTAELIPDTALFNECTGYEGDTVRGFLPAINRIHWLGDAGICASLDDMIAWEQFIDRTRHDENGLYRRLSSPQTFADGAPAPYGFGLKFEETGGKRLTGHGGALRGWRCQRWHCADERISTIVMFNFEGNASDAALKMMNAALGIPPAKPVRAQANPGWFGSWLNPETGLVLSLEDAGGGRMKARFGTGPEKMDISGENEAQSSMTTLRRDGDMIHLARKDENLHLAMHRLKGEARQDIAGRYRSDELEADLLLVSEGGAIYGAFEGFLGKSDMYPLYAAGPDVWLLPVQRSMDAPSPGEWKLVFHRDAAGRITGVTVGCWLARGVEYKRL</sequence>
<accession>Q8YD27</accession>
<reference key="1">
    <citation type="journal article" date="2002" name="Proc. Natl. Acad. Sci. U.S.A.">
        <title>The genome sequence of the facultative intracellular pathogen Brucella melitensis.</title>
        <authorList>
            <person name="DelVecchio V.G."/>
            <person name="Kapatral V."/>
            <person name="Redkar R.J."/>
            <person name="Patra G."/>
            <person name="Mujer C."/>
            <person name="Los T."/>
            <person name="Ivanova N."/>
            <person name="Anderson I."/>
            <person name="Bhattacharyya A."/>
            <person name="Lykidis A."/>
            <person name="Reznik G."/>
            <person name="Jablonski L."/>
            <person name="Larsen N."/>
            <person name="D'Souza M."/>
            <person name="Bernal A."/>
            <person name="Mazur M."/>
            <person name="Goltsman E."/>
            <person name="Selkov E."/>
            <person name="Elzer P.H."/>
            <person name="Hagius S."/>
            <person name="O'Callaghan D."/>
            <person name="Letesson J.-J."/>
            <person name="Haselkorn R."/>
            <person name="Kyrpides N.C."/>
            <person name="Overbeek R."/>
        </authorList>
    </citation>
    <scope>NUCLEOTIDE SEQUENCE [LARGE SCALE GENOMIC DNA]</scope>
    <source>
        <strain>ATCC 23456 / CCUG 17765 / NCTC 10094 / 16M</strain>
    </source>
</reference>
<name>DAP_BRUME</name>
<organism>
    <name type="scientific">Brucella melitensis biotype 1 (strain ATCC 23456 / CCUG 17765 / NCTC 10094 / 16M)</name>
    <dbReference type="NCBI Taxonomy" id="224914"/>
    <lineage>
        <taxon>Bacteria</taxon>
        <taxon>Pseudomonadati</taxon>
        <taxon>Pseudomonadota</taxon>
        <taxon>Alphaproteobacteria</taxon>
        <taxon>Hyphomicrobiales</taxon>
        <taxon>Brucellaceae</taxon>
        <taxon>Brucella/Ochrobactrum group</taxon>
        <taxon>Brucella</taxon>
    </lineage>
</organism>
<dbReference type="EC" id="3.4.11.19" evidence="1"/>
<dbReference type="EMBL" id="AE008918">
    <property type="protein sequence ID" value="AAL53592.1"/>
    <property type="molecule type" value="Genomic_DNA"/>
</dbReference>
<dbReference type="PIR" id="AE3553">
    <property type="entry name" value="AE3553"/>
</dbReference>
<dbReference type="RefSeq" id="WP_004682345.1">
    <property type="nucleotide sequence ID" value="NZ_GG703779.1"/>
</dbReference>
<dbReference type="SMR" id="Q8YD27"/>
<dbReference type="MEROPS" id="S12.002"/>
<dbReference type="GeneID" id="29596073"/>
<dbReference type="KEGG" id="bme:BMEII0350"/>
<dbReference type="KEGG" id="bmel:DK63_2890"/>
<dbReference type="PATRIC" id="fig|224914.52.peg.3029"/>
<dbReference type="eggNOG" id="COG1680">
    <property type="taxonomic scope" value="Bacteria"/>
</dbReference>
<dbReference type="PhylomeDB" id="Q8YD27"/>
<dbReference type="Proteomes" id="UP000000419">
    <property type="component" value="Chromosome II"/>
</dbReference>
<dbReference type="GO" id="GO:0004177">
    <property type="term" value="F:aminopeptidase activity"/>
    <property type="evidence" value="ECO:0007669"/>
    <property type="project" value="UniProtKB-UniRule"/>
</dbReference>
<dbReference type="GO" id="GO:0006508">
    <property type="term" value="P:proteolysis"/>
    <property type="evidence" value="ECO:0007669"/>
    <property type="project" value="UniProtKB-KW"/>
</dbReference>
<dbReference type="Gene3D" id="2.40.128.50">
    <property type="match status" value="2"/>
</dbReference>
<dbReference type="Gene3D" id="3.40.710.10">
    <property type="entry name" value="DD-peptidase/beta-lactamase superfamily"/>
    <property type="match status" value="1"/>
</dbReference>
<dbReference type="HAMAP" id="MF_01960">
    <property type="entry name" value="D_aminopeptidase"/>
    <property type="match status" value="1"/>
</dbReference>
<dbReference type="InterPro" id="IPR050491">
    <property type="entry name" value="Bact_CellWall_Synth/Modif"/>
</dbReference>
<dbReference type="InterPro" id="IPR001466">
    <property type="entry name" value="Beta-lactam-related"/>
</dbReference>
<dbReference type="InterPro" id="IPR012338">
    <property type="entry name" value="Beta-lactam/transpept-like"/>
</dbReference>
<dbReference type="InterPro" id="IPR027279">
    <property type="entry name" value="D_amino_pept/lipop_sf"/>
</dbReference>
<dbReference type="InterPro" id="IPR023645">
    <property type="entry name" value="DAP"/>
</dbReference>
<dbReference type="InterPro" id="IPR012856">
    <property type="entry name" value="DAP_B_dom"/>
</dbReference>
<dbReference type="NCBIfam" id="NF009622">
    <property type="entry name" value="PRK13128.1"/>
    <property type="match status" value="1"/>
</dbReference>
<dbReference type="PANTHER" id="PTHR46825:SF9">
    <property type="entry name" value="BETA-LACTAMASE-RELATED DOMAIN-CONTAINING PROTEIN"/>
    <property type="match status" value="1"/>
</dbReference>
<dbReference type="PANTHER" id="PTHR46825">
    <property type="entry name" value="D-ALANYL-D-ALANINE-CARBOXYPEPTIDASE/ENDOPEPTIDASE AMPH"/>
    <property type="match status" value="1"/>
</dbReference>
<dbReference type="Pfam" id="PF00144">
    <property type="entry name" value="Beta-lactamase"/>
    <property type="match status" value="1"/>
</dbReference>
<dbReference type="Pfam" id="PF07930">
    <property type="entry name" value="DAP_B"/>
    <property type="match status" value="1"/>
</dbReference>
<dbReference type="SUPFAM" id="SSF56601">
    <property type="entry name" value="beta-lactamase/transpeptidase-like"/>
    <property type="match status" value="1"/>
</dbReference>
<dbReference type="SUPFAM" id="SSF50886">
    <property type="entry name" value="D-aminopeptidase, middle and C-terminal domains"/>
    <property type="match status" value="2"/>
</dbReference>
<comment type="function">
    <text evidence="1">Hydrolyzes N-terminal residues in D-amino acid-containing peptides.</text>
</comment>
<comment type="catalytic activity">
    <reaction evidence="1">
        <text>Release of an N-terminal D-amino acid from a peptide, Xaa-|-Yaa-, in which Xaa is preferably D-Ala, D-Ser or D-Thr. D-amino acid amides and methyl esters also are hydrolyzed, as is glycine amide.</text>
        <dbReference type="EC" id="3.4.11.19"/>
    </reaction>
</comment>
<comment type="activity regulation">
    <text evidence="1">Inhibited by beta-lactam compounds such as 6-aminopenicillic acid, 7-aminocephalosporanic acid, benzylpenicillin and ampicillin. Inhibited by p-chloromercuribenzoate.</text>
</comment>
<comment type="subunit">
    <text evidence="1">Homodimer.</text>
</comment>
<comment type="similarity">
    <text evidence="1">Belongs to the peptidase S12 family.</text>
</comment>
<protein>
    <recommendedName>
        <fullName evidence="1">D-aminopeptidase</fullName>
        <ecNumber evidence="1">3.4.11.19</ecNumber>
    </recommendedName>
</protein>
<evidence type="ECO:0000255" key="1">
    <source>
        <dbReference type="HAMAP-Rule" id="MF_01960"/>
    </source>
</evidence>
<evidence type="ECO:0000256" key="2">
    <source>
        <dbReference type="SAM" id="MobiDB-lite"/>
    </source>
</evidence>